<dbReference type="EMBL" id="AF411970">
    <property type="protein sequence ID" value="AAL58845.1"/>
    <property type="molecule type" value="mRNA"/>
</dbReference>
<dbReference type="EMBL" id="AY519576">
    <property type="protein sequence ID" value="AAS10046.1"/>
    <property type="molecule type" value="mRNA"/>
</dbReference>
<dbReference type="EMBL" id="AC004681">
    <property type="protein sequence ID" value="AAC25928.1"/>
    <property type="molecule type" value="Genomic_DNA"/>
</dbReference>
<dbReference type="EMBL" id="AC005700">
    <property type="protein sequence ID" value="AAM15072.1"/>
    <property type="molecule type" value="Genomic_DNA"/>
</dbReference>
<dbReference type="EMBL" id="CP002685">
    <property type="protein sequence ID" value="AEC08688.1"/>
    <property type="molecule type" value="Genomic_DNA"/>
</dbReference>
<dbReference type="EMBL" id="CP002685">
    <property type="protein sequence ID" value="AEC08689.1"/>
    <property type="molecule type" value="Genomic_DNA"/>
</dbReference>
<dbReference type="EMBL" id="AK319141">
    <property type="protein sequence ID" value="BAH57256.1"/>
    <property type="molecule type" value="mRNA"/>
</dbReference>
<dbReference type="EMBL" id="AK229342">
    <property type="protein sequence ID" value="BAF01205.1"/>
    <property type="molecule type" value="mRNA"/>
</dbReference>
<dbReference type="EMBL" id="BT026381">
    <property type="protein sequence ID" value="ABH04488.1"/>
    <property type="molecule type" value="mRNA"/>
</dbReference>
<dbReference type="PIR" id="T02545">
    <property type="entry name" value="T02545"/>
</dbReference>
<dbReference type="RefSeq" id="NP_001077993.1">
    <molecule id="O80883-2"/>
    <property type="nucleotide sequence ID" value="NM_001084524.1"/>
</dbReference>
<dbReference type="RefSeq" id="NP_180805.1">
    <molecule id="O80883-1"/>
    <property type="nucleotide sequence ID" value="NM_128805.4"/>
</dbReference>
<dbReference type="SMR" id="O80883"/>
<dbReference type="IntAct" id="O80883">
    <property type="interactions" value="4"/>
</dbReference>
<dbReference type="STRING" id="3702.O80883"/>
<dbReference type="iPTMnet" id="O80883"/>
<dbReference type="PaxDb" id="3702-AT2G32460.1"/>
<dbReference type="EnsemblPlants" id="AT2G32460.1">
    <molecule id="O80883-1"/>
    <property type="protein sequence ID" value="AT2G32460.1"/>
    <property type="gene ID" value="AT2G32460"/>
</dbReference>
<dbReference type="EnsemblPlants" id="AT2G32460.2">
    <molecule id="O80883-2"/>
    <property type="protein sequence ID" value="AT2G32460.2"/>
    <property type="gene ID" value="AT2G32460"/>
</dbReference>
<dbReference type="GeneID" id="817807"/>
<dbReference type="Gramene" id="AT2G32460.1">
    <molecule id="O80883-1"/>
    <property type="protein sequence ID" value="AT2G32460.1"/>
    <property type="gene ID" value="AT2G32460"/>
</dbReference>
<dbReference type="Gramene" id="AT2G32460.2">
    <molecule id="O80883-2"/>
    <property type="protein sequence ID" value="AT2G32460.2"/>
    <property type="gene ID" value="AT2G32460"/>
</dbReference>
<dbReference type="KEGG" id="ath:AT2G32460"/>
<dbReference type="Araport" id="AT2G32460"/>
<dbReference type="TAIR" id="AT2G32460">
    <property type="gene designation" value="MYB101"/>
</dbReference>
<dbReference type="eggNOG" id="KOG0048">
    <property type="taxonomic scope" value="Eukaryota"/>
</dbReference>
<dbReference type="InParanoid" id="O80883"/>
<dbReference type="OMA" id="WYGMKDI"/>
<dbReference type="PhylomeDB" id="O80883"/>
<dbReference type="PRO" id="PR:O80883"/>
<dbReference type="Proteomes" id="UP000006548">
    <property type="component" value="Chromosome 2"/>
</dbReference>
<dbReference type="ExpressionAtlas" id="O80883">
    <property type="expression patterns" value="baseline and differential"/>
</dbReference>
<dbReference type="GO" id="GO:0005634">
    <property type="term" value="C:nucleus"/>
    <property type="evidence" value="ECO:0000314"/>
    <property type="project" value="UniProtKB"/>
</dbReference>
<dbReference type="GO" id="GO:0090406">
    <property type="term" value="C:pollen tube"/>
    <property type="evidence" value="ECO:0000314"/>
    <property type="project" value="TAIR"/>
</dbReference>
<dbReference type="GO" id="GO:0003677">
    <property type="term" value="F:DNA binding"/>
    <property type="evidence" value="ECO:0007669"/>
    <property type="project" value="UniProtKB-KW"/>
</dbReference>
<dbReference type="GO" id="GO:0003700">
    <property type="term" value="F:DNA-binding transcription factor activity"/>
    <property type="evidence" value="ECO:0000314"/>
    <property type="project" value="UniProtKB"/>
</dbReference>
<dbReference type="GO" id="GO:0009740">
    <property type="term" value="P:gibberellic acid mediated signaling pathway"/>
    <property type="evidence" value="ECO:0000304"/>
    <property type="project" value="TAIR"/>
</dbReference>
<dbReference type="GO" id="GO:0009555">
    <property type="term" value="P:pollen development"/>
    <property type="evidence" value="ECO:0000315"/>
    <property type="project" value="TAIR"/>
</dbReference>
<dbReference type="GO" id="GO:0048235">
    <property type="term" value="P:pollen sperm cell differentiation"/>
    <property type="evidence" value="ECO:0000315"/>
    <property type="project" value="UniProtKB"/>
</dbReference>
<dbReference type="GO" id="GO:0009789">
    <property type="term" value="P:positive regulation of abscisic acid-activated signaling pathway"/>
    <property type="evidence" value="ECO:0000315"/>
    <property type="project" value="TAIR"/>
</dbReference>
<dbReference type="GO" id="GO:0045893">
    <property type="term" value="P:positive regulation of DNA-templated transcription"/>
    <property type="evidence" value="ECO:0000314"/>
    <property type="project" value="UniProtKB"/>
</dbReference>
<dbReference type="GO" id="GO:0043068">
    <property type="term" value="P:positive regulation of programmed cell death"/>
    <property type="evidence" value="ECO:0000315"/>
    <property type="project" value="TAIR"/>
</dbReference>
<dbReference type="GO" id="GO:1990019">
    <property type="term" value="P:protein storage vacuole organization"/>
    <property type="evidence" value="ECO:0000315"/>
    <property type="project" value="UniProtKB"/>
</dbReference>
<dbReference type="GO" id="GO:0010468">
    <property type="term" value="P:regulation of gene expression"/>
    <property type="evidence" value="ECO:0000315"/>
    <property type="project" value="UniProtKB"/>
</dbReference>
<dbReference type="GO" id="GO:1901371">
    <property type="term" value="P:regulation of leaf morphogenesis"/>
    <property type="evidence" value="ECO:0000315"/>
    <property type="project" value="UniProtKB"/>
</dbReference>
<dbReference type="GO" id="GO:0080092">
    <property type="term" value="P:regulation of pollen tube growth"/>
    <property type="evidence" value="ECO:0000315"/>
    <property type="project" value="UniProtKB"/>
</dbReference>
<dbReference type="GO" id="GO:0009739">
    <property type="term" value="P:response to gibberellin"/>
    <property type="evidence" value="ECO:0000270"/>
    <property type="project" value="UniProtKB"/>
</dbReference>
<dbReference type="CDD" id="cd00167">
    <property type="entry name" value="SANT"/>
    <property type="match status" value="2"/>
</dbReference>
<dbReference type="FunFam" id="1.10.10.60:FF:000001">
    <property type="entry name" value="MYB-related transcription factor"/>
    <property type="match status" value="1"/>
</dbReference>
<dbReference type="FunFam" id="1.10.10.60:FF:000404">
    <property type="entry name" value="Transcription factor MYB97"/>
    <property type="match status" value="1"/>
</dbReference>
<dbReference type="Gene3D" id="1.10.10.60">
    <property type="entry name" value="Homeodomain-like"/>
    <property type="match status" value="2"/>
</dbReference>
<dbReference type="InterPro" id="IPR009057">
    <property type="entry name" value="Homeodomain-like_sf"/>
</dbReference>
<dbReference type="InterPro" id="IPR017930">
    <property type="entry name" value="Myb_dom"/>
</dbReference>
<dbReference type="InterPro" id="IPR001005">
    <property type="entry name" value="SANT/Myb"/>
</dbReference>
<dbReference type="PANTHER" id="PTHR47995:SF6">
    <property type="entry name" value="MYB DOMAIN PROTEIN 81-RELATED"/>
    <property type="match status" value="1"/>
</dbReference>
<dbReference type="PANTHER" id="PTHR47995">
    <property type="entry name" value="TRANSCRIPTION FACTOR MYB33-RELATED"/>
    <property type="match status" value="1"/>
</dbReference>
<dbReference type="Pfam" id="PF00249">
    <property type="entry name" value="Myb_DNA-binding"/>
    <property type="match status" value="2"/>
</dbReference>
<dbReference type="SMART" id="SM00717">
    <property type="entry name" value="SANT"/>
    <property type="match status" value="2"/>
</dbReference>
<dbReference type="SUPFAM" id="SSF46689">
    <property type="entry name" value="Homeodomain-like"/>
    <property type="match status" value="1"/>
</dbReference>
<dbReference type="PROSITE" id="PS51294">
    <property type="entry name" value="HTH_MYB"/>
    <property type="match status" value="2"/>
</dbReference>
<keyword id="KW-0010">Activator</keyword>
<keyword id="KW-0025">Alternative splicing</keyword>
<keyword id="KW-0238">DNA-binding</keyword>
<keyword id="KW-0539">Nucleus</keyword>
<keyword id="KW-1185">Reference proteome</keyword>
<keyword id="KW-0677">Repeat</keyword>
<keyword id="KW-0804">Transcription</keyword>
<keyword id="KW-0805">Transcription regulation</keyword>
<organism>
    <name type="scientific">Arabidopsis thaliana</name>
    <name type="common">Mouse-ear cress</name>
    <dbReference type="NCBI Taxonomy" id="3702"/>
    <lineage>
        <taxon>Eukaryota</taxon>
        <taxon>Viridiplantae</taxon>
        <taxon>Streptophyta</taxon>
        <taxon>Embryophyta</taxon>
        <taxon>Tracheophyta</taxon>
        <taxon>Spermatophyta</taxon>
        <taxon>Magnoliopsida</taxon>
        <taxon>eudicotyledons</taxon>
        <taxon>Gunneridae</taxon>
        <taxon>Pentapetalae</taxon>
        <taxon>rosids</taxon>
        <taxon>malvids</taxon>
        <taxon>Brassicales</taxon>
        <taxon>Brassicaceae</taxon>
        <taxon>Camelineae</taxon>
        <taxon>Arabidopsis</taxon>
    </lineage>
</organism>
<comment type="function">
    <text evidence="3 5 6 7 8 9 10">Transcription activator (PubMed:24278028, PubMed:25268707). Binds to 5'-CAACTGTC-3' and/or 5'-TAACAAA-3' motif in target gene promoter (e.g. alpha-amylase) to promote their expression (PubMed:11743113). Positive regulator of abscisic acid (ABA) responses leading to growth arrest during seed germination (PubMed:17217461). Promotes the expression of aleurone-related genes (e.g. CP1, CP, GASA1, BXL1 and BXL2) in seeds. Together with MYB33 and MYB65, promotes the programmed cell death (PCD) leading to vacuolation of protein storage vacuoles (PSVs) in the aleurone layers during seed germination (PubMed:20699403). Maybe involved in the regulation of leaves lamina morphogenesis (PubMed:25268707). Involved in pollen grain development (PubMed:22101548). Together with MYB97 and MYB120, functions as a male factor that controls pollen tube-synergid interaction in fertilization. Required for pollen tube growth arrest and sperm cell release in the female gametophyte, probably via the regulation of pollen tube-specific gene expression (PubMed:23791732, PubMed:24278028).</text>
</comment>
<comment type="interaction">
    <interactant intactId="EBI-15215062">
        <id>O80883</id>
    </interactant>
    <interactant intactId="EBI-591197">
        <id>Q9FYF9</id>
        <label>At1g67340</label>
    </interactant>
    <organismsDiffer>false</organismsDiffer>
    <experiments>3</experiments>
</comment>
<comment type="subcellular location">
    <subcellularLocation>
        <location evidence="1 8 9 10">Nucleus</location>
    </subcellularLocation>
    <text evidence="8">Detected in the vegetative nucleus of mature pollen grains and pollen tubes.</text>
</comment>
<comment type="alternative products">
    <event type="alternative splicing"/>
    <isoform>
        <id>O80883-1</id>
        <name>1</name>
        <sequence type="displayed"/>
    </isoform>
    <isoform>
        <id>O80883-2</id>
        <name>2</name>
        <sequence type="described" ref="VSP_058816"/>
    </isoform>
    <isoform>
        <id>O80883-3</id>
        <name>3</name>
        <sequence type="described" ref="VSP_058815"/>
    </isoform>
</comment>
<comment type="tissue specificity">
    <text evidence="3 8 9 10">Present mostly in flowers, siliques and floral shoot tips (PubMed:11743113, PubMed:25268707). Expression is restricted to the subapical pith cells of both vegetative and flowering plants and to the hypocotyl hook (PubMed:11743113). Expressed in pollen grains and pollen tube (PubMed:23791732, PubMed:24278028). Mostly expressed in mature pollen grains, and, to a lower extent, in inflorescences and siliques (PubMed:24278028).</text>
</comment>
<comment type="developmental stage">
    <text evidence="3 8">Present in a small patch of cells on the innermost side of the hypocotyl hook of the germinating seedling, in the subapical pith cells of plants growing vegetatively, in a similar zone of expanding cells both in developing inflorescence stems, and below mature flowers and elongating siliques (PubMed:11743113). Accumulates in the pollen tube nucleus during pollen tube growth through the pistil (PubMed:23791732).</text>
</comment>
<comment type="induction">
    <text evidence="4 5 6">Repressed in germinating seeds by microRNA159 (miR159)-mediated cleavage in an abscisic acid (ABA) and ABI3-dependent manner, probably to desensitize hormone signaling during seedling stress responses (PubMed:15226253, PubMed:17217461). Induced by increased upon gibberellic acid (GA) treatment (PubMed:20699403).</text>
</comment>
<comment type="disruption phenotype">
    <text evidence="5 6 7 8 9">Hyposensitivity to abscisic acid (ABA) (PubMed:17217461). Reduced expression levels of aleurone-related genes (e.g. CP1, CP, GASA1, BXL1 and BXL2) in seeds. The triple mutant myb33 myb65 myb101 has a male sterility and exhibits slower protein storage vacuoles (PSVs) vacuolation rate in aleurone layers upon seed germination (PubMed:20699403). Reduced production of abnormal pollen grains with misarranged male germ unit (MGU) (PubMed:22101548). The triple mutant myb97 myb101 myb120 is impaired in pollen tube growth arrest and subsequent sperm cell release in the female gametophyte thus leading to a drastically reduced fertility. Altered pollen tube-specific gene expression (PubMed:23791732, PubMed:24278028).</text>
</comment>
<feature type="chain" id="PRO_0000439245" description="Transcription factor MYB101">
    <location>
        <begin position="1"/>
        <end position="490"/>
    </location>
</feature>
<feature type="domain" description="HTH myb-type 1" evidence="1">
    <location>
        <begin position="15"/>
        <end position="67"/>
    </location>
</feature>
<feature type="domain" description="HTH myb-type 2" evidence="1">
    <location>
        <begin position="68"/>
        <end position="122"/>
    </location>
</feature>
<feature type="DNA-binding region" description="H-T-H motif" evidence="1">
    <location>
        <begin position="43"/>
        <end position="67"/>
    </location>
</feature>
<feature type="DNA-binding region" description="H-T-H motif" evidence="1">
    <location>
        <begin position="95"/>
        <end position="118"/>
    </location>
</feature>
<feature type="region of interest" description="Disordered" evidence="2">
    <location>
        <begin position="1"/>
        <end position="21"/>
    </location>
</feature>
<feature type="region of interest" description="Disordered" evidence="2">
    <location>
        <begin position="168"/>
        <end position="206"/>
    </location>
</feature>
<feature type="compositionally biased region" description="Low complexity" evidence="2">
    <location>
        <begin position="169"/>
        <end position="186"/>
    </location>
</feature>
<feature type="splice variant" id="VSP_058815" description="In isoform 3.">
    <location>
        <begin position="1"/>
        <end position="97"/>
    </location>
</feature>
<feature type="splice variant" id="VSP_058816" description="In isoform 2.">
    <original>MDGGGETTATATME</original>
    <variation>MV</variation>
    <location>
        <begin position="1"/>
        <end position="14"/>
    </location>
</feature>
<feature type="sequence conflict" description="In Ref. 1; AAL58845." evidence="13" ref="1">
    <original>S</original>
    <variation>N</variation>
    <location>
        <position position="314"/>
    </location>
</feature>
<feature type="sequence conflict" description="In Ref. 1; AAL58845." evidence="13" ref="1">
    <original>N</original>
    <variation>H</variation>
    <location>
        <position position="383"/>
    </location>
</feature>
<accession>O80883</accession>
<accession>A8MSC3</accession>
<accession>C0Z3H7</accession>
<accession>Q8W1W5</accession>
<proteinExistence type="evidence at protein level"/>
<evidence type="ECO:0000255" key="1">
    <source>
        <dbReference type="PROSITE-ProRule" id="PRU00625"/>
    </source>
</evidence>
<evidence type="ECO:0000256" key="2">
    <source>
        <dbReference type="SAM" id="MobiDB-lite"/>
    </source>
</evidence>
<evidence type="ECO:0000269" key="3">
    <source>
    </source>
</evidence>
<evidence type="ECO:0000269" key="4">
    <source>
    </source>
</evidence>
<evidence type="ECO:0000269" key="5">
    <source>
    </source>
</evidence>
<evidence type="ECO:0000269" key="6">
    <source>
    </source>
</evidence>
<evidence type="ECO:0000269" key="7">
    <source>
    </source>
</evidence>
<evidence type="ECO:0000269" key="8">
    <source>
    </source>
</evidence>
<evidence type="ECO:0000269" key="9">
    <source>
    </source>
</evidence>
<evidence type="ECO:0000269" key="10">
    <source>
    </source>
</evidence>
<evidence type="ECO:0000303" key="11">
    <source>
    </source>
</evidence>
<evidence type="ECO:0000303" key="12">
    <source>
    </source>
</evidence>
<evidence type="ECO:0000305" key="13"/>
<evidence type="ECO:0000312" key="14">
    <source>
        <dbReference type="Araport" id="AT2G32460"/>
    </source>
</evidence>
<reference key="1">
    <citation type="journal article" date="2001" name="Plant Physiol.">
        <title>GAMYB-like genes, flowering, and gibberellin signaling in Arabidopsis.</title>
        <authorList>
            <person name="Gocal G.F.W."/>
            <person name="Sheldon C.C."/>
            <person name="Gubler F."/>
            <person name="Moritz T."/>
            <person name="Bagnall D.J."/>
            <person name="MacMillan C.P."/>
            <person name="Li S.F."/>
            <person name="Parish R.W."/>
            <person name="Dennis E.S."/>
            <person name="Weigel D."/>
            <person name="King R.W."/>
        </authorList>
    </citation>
    <scope>NUCLEOTIDE SEQUENCE [MRNA] (ISOFORM 1)</scope>
    <scope>FUNCTION</scope>
    <scope>TISSUE SPECIFICITY</scope>
    <scope>DEVELOPMENTAL STAGE</scope>
    <source>
        <strain>cv. Columbia</strain>
        <strain>cv. Landsberg erecta</strain>
    </source>
</reference>
<reference key="2">
    <citation type="submission" date="2004-01" db="EMBL/GenBank/DDBJ databases">
        <title>The MYB transcription factor family in Arabidopsis: A genome-wide cloning and expression pattern analysis.</title>
        <authorList>
            <person name="Qu L."/>
            <person name="Gu H."/>
        </authorList>
    </citation>
    <scope>NUCLEOTIDE SEQUENCE [MRNA] (ISOFORM 1)</scope>
</reference>
<reference key="3">
    <citation type="journal article" date="1999" name="Nature">
        <title>Sequence and analysis of chromosome 2 of the plant Arabidopsis thaliana.</title>
        <authorList>
            <person name="Lin X."/>
            <person name="Kaul S."/>
            <person name="Rounsley S.D."/>
            <person name="Shea T.P."/>
            <person name="Benito M.-I."/>
            <person name="Town C.D."/>
            <person name="Fujii C.Y."/>
            <person name="Mason T.M."/>
            <person name="Bowman C.L."/>
            <person name="Barnstead M.E."/>
            <person name="Feldblyum T.V."/>
            <person name="Buell C.R."/>
            <person name="Ketchum K.A."/>
            <person name="Lee J.J."/>
            <person name="Ronning C.M."/>
            <person name="Koo H.L."/>
            <person name="Moffat K.S."/>
            <person name="Cronin L.A."/>
            <person name="Shen M."/>
            <person name="Pai G."/>
            <person name="Van Aken S."/>
            <person name="Umayam L."/>
            <person name="Tallon L.J."/>
            <person name="Gill J.E."/>
            <person name="Adams M.D."/>
            <person name="Carrera A.J."/>
            <person name="Creasy T.H."/>
            <person name="Goodman H.M."/>
            <person name="Somerville C.R."/>
            <person name="Copenhaver G.P."/>
            <person name="Preuss D."/>
            <person name="Nierman W.C."/>
            <person name="White O."/>
            <person name="Eisen J.A."/>
            <person name="Salzberg S.L."/>
            <person name="Fraser C.M."/>
            <person name="Venter J.C."/>
        </authorList>
    </citation>
    <scope>NUCLEOTIDE SEQUENCE [LARGE SCALE GENOMIC DNA]</scope>
    <source>
        <strain>cv. Columbia</strain>
    </source>
</reference>
<reference key="4">
    <citation type="journal article" date="2017" name="Plant J.">
        <title>Araport11: a complete reannotation of the Arabidopsis thaliana reference genome.</title>
        <authorList>
            <person name="Cheng C.Y."/>
            <person name="Krishnakumar V."/>
            <person name="Chan A.P."/>
            <person name="Thibaud-Nissen F."/>
            <person name="Schobel S."/>
            <person name="Town C.D."/>
        </authorList>
    </citation>
    <scope>GENOME REANNOTATION</scope>
    <source>
        <strain>cv. Columbia</strain>
    </source>
</reference>
<reference key="5">
    <citation type="journal article" date="2009" name="DNA Res.">
        <title>Analysis of multiple occurrences of alternative splicing events in Arabidopsis thaliana using novel sequenced full-length cDNAs.</title>
        <authorList>
            <person name="Iida K."/>
            <person name="Fukami-Kobayashi K."/>
            <person name="Toyoda A."/>
            <person name="Sakaki Y."/>
            <person name="Kobayashi M."/>
            <person name="Seki M."/>
            <person name="Shinozaki K."/>
        </authorList>
    </citation>
    <scope>NUCLEOTIDE SEQUENCE [LARGE SCALE MRNA] (ISOFORM 3)</scope>
    <source>
        <strain>cv. Columbia</strain>
    </source>
</reference>
<reference key="6">
    <citation type="submission" date="2006-07" db="EMBL/GenBank/DDBJ databases">
        <title>Large-scale analysis of RIKEN Arabidopsis full-length (RAFL) cDNAs.</title>
        <authorList>
            <person name="Totoki Y."/>
            <person name="Seki M."/>
            <person name="Ishida J."/>
            <person name="Nakajima M."/>
            <person name="Enju A."/>
            <person name="Kamiya A."/>
            <person name="Narusaka M."/>
            <person name="Shin-i T."/>
            <person name="Nakagawa M."/>
            <person name="Sakamoto N."/>
            <person name="Oishi K."/>
            <person name="Kohara Y."/>
            <person name="Kobayashi M."/>
            <person name="Toyoda A."/>
            <person name="Sakaki Y."/>
            <person name="Sakurai T."/>
            <person name="Iida K."/>
            <person name="Akiyama K."/>
            <person name="Satou M."/>
            <person name="Toyoda T."/>
            <person name="Konagaya A."/>
            <person name="Carninci P."/>
            <person name="Kawai J."/>
            <person name="Hayashizaki Y."/>
            <person name="Shinozaki K."/>
        </authorList>
    </citation>
    <scope>NUCLEOTIDE SEQUENCE [LARGE SCALE MRNA] (ISOFORM 1)</scope>
    <source>
        <strain>cv. Columbia</strain>
    </source>
</reference>
<reference key="7">
    <citation type="submission" date="2006-08" db="EMBL/GenBank/DDBJ databases">
        <title>Arabidopsis ORF Clones.</title>
        <authorList>
            <person name="Quinitio C."/>
            <person name="Chen H."/>
            <person name="Kim C.J."/>
            <person name="Shinn P."/>
            <person name="Ecker J.R."/>
        </authorList>
    </citation>
    <scope>NUCLEOTIDE SEQUENCE [LARGE SCALE MRNA]</scope>
    <source>
        <strain>cv. Columbia</strain>
    </source>
</reference>
<reference key="8">
    <citation type="journal article" date="1998" name="Plant J.">
        <title>Towards functional characterisation of the members of the R2R3-MYB gene family from Arabidopsis thaliana.</title>
        <authorList>
            <person name="Kranz H.D."/>
            <person name="Denekamp M."/>
            <person name="Greco R."/>
            <person name="Jin H.-L."/>
            <person name="Leyva A."/>
            <person name="Meissner R.C."/>
            <person name="Petroni K."/>
            <person name="Urzainqui A."/>
            <person name="Bevan M."/>
            <person name="Martin C."/>
            <person name="Smeekens S."/>
            <person name="Tonelli C."/>
            <person name="Paz-Ares J."/>
            <person name="Weisshaar B."/>
        </authorList>
    </citation>
    <scope>GENE FAMILY</scope>
    <scope>NOMENCLATURE</scope>
    <source>
        <strain>cv. Columbia</strain>
    </source>
</reference>
<reference key="9">
    <citation type="journal article" date="2001" name="Curr. Opin. Plant Biol.">
        <title>The R2R3-MYB gene family in Arabidopsis thaliana.</title>
        <authorList>
            <person name="Stracke R."/>
            <person name="Werber M."/>
            <person name="Weisshaar B."/>
        </authorList>
    </citation>
    <scope>GENE FAMILY</scope>
    <scope>NOMENCLATURE</scope>
    <source>
        <strain>cv. Columbia</strain>
    </source>
</reference>
<reference key="10">
    <citation type="journal article" date="2004" name="Development">
        <title>Modulation of floral development by a gibberellin-regulated microRNA.</title>
        <authorList>
            <person name="Achard P."/>
            <person name="Herr A."/>
            <person name="Baulcombe D.C."/>
            <person name="Harberd N.P."/>
        </authorList>
    </citation>
    <scope>REPRESSION BY MICRORNA159</scope>
</reference>
<reference key="11">
    <citation type="journal article" date="2007" name="Plant J.">
        <title>ABA induction of miR159 controls transcript levels of two MYB factors during Arabidopsis seed germination.</title>
        <authorList>
            <person name="Reyes J.L."/>
            <person name="Chua N.-H."/>
        </authorList>
    </citation>
    <scope>FUNCTION</scope>
    <scope>DISRUPTION PHENOTYPE</scope>
    <scope>REPRESSION BY MICRORNA159</scope>
    <source>
        <strain>cv. Columbia</strain>
    </source>
</reference>
<reference key="12">
    <citation type="journal article" date="2010" name="Plant Physiol.">
        <title>The microRNA159-regulated GAMYB-like genes inhibit growth and promote programmed cell death in Arabidopsis.</title>
        <authorList>
            <person name="Alonso-Peral M.M."/>
            <person name="Li J."/>
            <person name="Li Y."/>
            <person name="Allen R.S."/>
            <person name="Schnippenkoetter W."/>
            <person name="Ohms S."/>
            <person name="White R.G."/>
            <person name="Millar A.A."/>
        </authorList>
    </citation>
    <scope>FUNCTION</scope>
    <scope>DISRUPTION PHENOTYPE</scope>
    <scope>INDUCTION BY GIBBERELLIC ACID</scope>
    <source>
        <strain>cv. Columbia</strain>
    </source>
</reference>
<reference key="13">
    <citation type="journal article" date="2012" name="Sex. Plant Reprod.">
        <title>Wide-scale screening of T-DNA lines for transcription factor genes affecting male gametophyte development in Arabidopsis.</title>
        <authorList>
            <person name="Renak D."/>
            <person name="Dupl'akova N."/>
            <person name="Honys D."/>
        </authorList>
    </citation>
    <scope>FUNCTION</scope>
    <scope>DISRUPTION PHENOTYPE</scope>
</reference>
<reference key="14">
    <citation type="journal article" date="2013" name="Curr. Biol.">
        <title>Three MYB transcription factors control pollen tube differentiation required for sperm release.</title>
        <authorList>
            <person name="Leydon A.R."/>
            <person name="Beale K.M."/>
            <person name="Woroniecka K."/>
            <person name="Castner E."/>
            <person name="Chen J."/>
            <person name="Horgan C."/>
            <person name="Palanivelu R."/>
            <person name="Johnson M.A."/>
        </authorList>
    </citation>
    <scope>FUNCTION</scope>
    <scope>DISRUPTION PHENOTYPE</scope>
    <scope>TISSUE SPECIFICITY</scope>
    <scope>DEVELOPMENTAL STAGE</scope>
    <scope>SUBCELLULAR LOCATION</scope>
    <source>
        <strain>cv. Columbia</strain>
    </source>
</reference>
<reference key="15">
    <citation type="journal article" date="2013" name="PLoS Genet.">
        <title>MYB97, MYB101 and MYB120 function as male factors that control pollen tube-synergid interaction in Arabidopsis thaliana fertilization.</title>
        <authorList>
            <person name="Liang Y."/>
            <person name="Tan Z.-M."/>
            <person name="Zhu L."/>
            <person name="Niu Q.-K."/>
            <person name="Zhou J.-J."/>
            <person name="Li M."/>
            <person name="Chen L.-Q."/>
            <person name="Zhang X.-Q."/>
            <person name="Ye D."/>
        </authorList>
    </citation>
    <scope>FUNCTION</scope>
    <scope>DISRUPTION PHENOTYPE</scope>
    <scope>SUBCELLULAR LOCATION</scope>
    <scope>TISSUE SPECIFICITY</scope>
    <source>
        <strain>cv. Columbia</strain>
    </source>
</reference>
<reference key="16">
    <citation type="journal article" date="2014" name="PLoS ONE">
        <title>The over-expression of two transcription factors, ABS5/bHLH30 and ABS7/MYB101, leads to upwardly curly leaves.</title>
        <authorList>
            <person name="An R."/>
            <person name="Liu X."/>
            <person name="Wang R."/>
            <person name="Wu H."/>
            <person name="Liang S."/>
            <person name="Shao J."/>
            <person name="Qi Y."/>
            <person name="An L."/>
            <person name="Yu F."/>
        </authorList>
    </citation>
    <scope>FUNCTION</scope>
    <scope>SUBCELLULAR LOCATION</scope>
    <scope>TISSUE SPECIFICITY</scope>
    <source>
        <strain>cv. Columbia</strain>
    </source>
</reference>
<name>MB101_ARATH</name>
<protein>
    <recommendedName>
        <fullName evidence="11">Transcription factor MYB101</fullName>
    </recommendedName>
    <alternativeName>
        <fullName evidence="11">Myb-related protein 101</fullName>
        <shortName evidence="11">AtM1</shortName>
        <shortName evidence="11">AtMYB101</shortName>
    </alternativeName>
    <alternativeName>
        <fullName evidence="12">Protein ABNORMAL SHOOT 7</fullName>
    </alternativeName>
</protein>
<sequence length="490" mass="54437">MDGGGETTATATMEGRGLKKGPWTTTEDAILTEYVRKHGEGNWNAVQKNSGLLRCGKSCRLRWANHLRPNLKKGSFTPDEEKIIIDLHAKLGNKWARMASQLPGRTDNEIKNYWNTRMKRRQRAGLPLYPHEIQHQGIDIDDEFEFDLTSFQFQNQDLDHNHQNMIQYTNSSNTSSSSSSFSSSSSQPSKRLRPDPLVSTNPGLNPIPDSSMDFQMFSLYNNSLENDNNQFGFSVPLSSSSSSNEVCNPNHILEYISENSDTRNTNKKDIDAMSYSSLLMGDLEIRSSSFPLGLDNSVLELPSNQRPTHSFSSSPIIDNGVHLEPPSGNSGLLDALLEESQALSRGGLFKDVRVSSSDLCEVQDKRVKMDFENLLIDHLNSSNHSSLGANPNIHNKYNEPTMVKVTVDDDDELLTSLLNNFPSTTTPLPDWYRVTEMQNEASYLAPPSGILMGNHQGNGRVEPPTVPPSSSVDPMASLGSCYWSNMPSIC</sequence>
<gene>
    <name evidence="11" type="primary">MYB101</name>
    <name evidence="12" type="synonym">ABS7</name>
    <name evidence="14" type="ordered locus">At2g32460</name>
</gene>